<evidence type="ECO:0000250" key="1"/>
<evidence type="ECO:0000305" key="2"/>
<reference key="1">
    <citation type="journal article" date="2001" name="DNA Res.">
        <title>Complete genomic sequence of the filamentous nitrogen-fixing cyanobacterium Anabaena sp. strain PCC 7120.</title>
        <authorList>
            <person name="Kaneko T."/>
            <person name="Nakamura Y."/>
            <person name="Wolk C.P."/>
            <person name="Kuritz T."/>
            <person name="Sasamoto S."/>
            <person name="Watanabe A."/>
            <person name="Iriguchi M."/>
            <person name="Ishikawa A."/>
            <person name="Kawashima K."/>
            <person name="Kimura T."/>
            <person name="Kishida Y."/>
            <person name="Kohara M."/>
            <person name="Matsumoto M."/>
            <person name="Matsuno A."/>
            <person name="Muraki A."/>
            <person name="Nakazaki N."/>
            <person name="Shimpo S."/>
            <person name="Sugimoto M."/>
            <person name="Takazawa M."/>
            <person name="Yamada M."/>
            <person name="Yasuda M."/>
            <person name="Tabata S."/>
        </authorList>
    </citation>
    <scope>NUCLEOTIDE SEQUENCE [LARGE SCALE GENOMIC DNA]</scope>
    <source>
        <strain>PCC 7120 / SAG 25.82 / UTEX 2576</strain>
    </source>
</reference>
<organism>
    <name type="scientific">Nostoc sp. (strain PCC 7120 / SAG 25.82 / UTEX 2576)</name>
    <dbReference type="NCBI Taxonomy" id="103690"/>
    <lineage>
        <taxon>Bacteria</taxon>
        <taxon>Bacillati</taxon>
        <taxon>Cyanobacteriota</taxon>
        <taxon>Cyanophyceae</taxon>
        <taxon>Nostocales</taxon>
        <taxon>Nostocaceae</taxon>
        <taxon>Nostoc</taxon>
    </lineage>
</organism>
<dbReference type="EC" id="2.6.1.9"/>
<dbReference type="EMBL" id="BA000019">
    <property type="protein sequence ID" value="BAB73791.1"/>
    <property type="molecule type" value="Genomic_DNA"/>
</dbReference>
<dbReference type="PIR" id="AF2067">
    <property type="entry name" value="AF2067"/>
</dbReference>
<dbReference type="SMR" id="Q8YV89"/>
<dbReference type="STRING" id="103690.gene:10494121"/>
<dbReference type="KEGG" id="ana:alr2092"/>
<dbReference type="eggNOG" id="COG0079">
    <property type="taxonomic scope" value="Bacteria"/>
</dbReference>
<dbReference type="OrthoDB" id="9813612at2"/>
<dbReference type="UniPathway" id="UPA00031">
    <property type="reaction ID" value="UER00012"/>
</dbReference>
<dbReference type="Proteomes" id="UP000002483">
    <property type="component" value="Chromosome"/>
</dbReference>
<dbReference type="GO" id="GO:0004400">
    <property type="term" value="F:histidinol-phosphate transaminase activity"/>
    <property type="evidence" value="ECO:0007669"/>
    <property type="project" value="UniProtKB-UniRule"/>
</dbReference>
<dbReference type="GO" id="GO:0030170">
    <property type="term" value="F:pyridoxal phosphate binding"/>
    <property type="evidence" value="ECO:0007669"/>
    <property type="project" value="InterPro"/>
</dbReference>
<dbReference type="GO" id="GO:0000105">
    <property type="term" value="P:L-histidine biosynthetic process"/>
    <property type="evidence" value="ECO:0007669"/>
    <property type="project" value="UniProtKB-UniRule"/>
</dbReference>
<dbReference type="CDD" id="cd00609">
    <property type="entry name" value="AAT_like"/>
    <property type="match status" value="1"/>
</dbReference>
<dbReference type="Gene3D" id="3.90.1150.10">
    <property type="entry name" value="Aspartate Aminotransferase, domain 1"/>
    <property type="match status" value="1"/>
</dbReference>
<dbReference type="Gene3D" id="3.40.640.10">
    <property type="entry name" value="Type I PLP-dependent aspartate aminotransferase-like (Major domain)"/>
    <property type="match status" value="1"/>
</dbReference>
<dbReference type="HAMAP" id="MF_01023">
    <property type="entry name" value="HisC_aminotrans_2"/>
    <property type="match status" value="1"/>
</dbReference>
<dbReference type="InterPro" id="IPR001917">
    <property type="entry name" value="Aminotrans_II_pyridoxalP_BS"/>
</dbReference>
<dbReference type="InterPro" id="IPR004839">
    <property type="entry name" value="Aminotransferase_I/II_large"/>
</dbReference>
<dbReference type="InterPro" id="IPR005861">
    <property type="entry name" value="HisP_aminotrans"/>
</dbReference>
<dbReference type="InterPro" id="IPR050106">
    <property type="entry name" value="HistidinolP_aminotransfase"/>
</dbReference>
<dbReference type="InterPro" id="IPR015424">
    <property type="entry name" value="PyrdxlP-dep_Trfase"/>
</dbReference>
<dbReference type="InterPro" id="IPR015421">
    <property type="entry name" value="PyrdxlP-dep_Trfase_major"/>
</dbReference>
<dbReference type="InterPro" id="IPR015422">
    <property type="entry name" value="PyrdxlP-dep_Trfase_small"/>
</dbReference>
<dbReference type="NCBIfam" id="TIGR01141">
    <property type="entry name" value="hisC"/>
    <property type="match status" value="1"/>
</dbReference>
<dbReference type="PANTHER" id="PTHR43643:SF3">
    <property type="entry name" value="HISTIDINOL-PHOSPHATE AMINOTRANSFERASE"/>
    <property type="match status" value="1"/>
</dbReference>
<dbReference type="PANTHER" id="PTHR43643">
    <property type="entry name" value="HISTIDINOL-PHOSPHATE AMINOTRANSFERASE 2"/>
    <property type="match status" value="1"/>
</dbReference>
<dbReference type="Pfam" id="PF00155">
    <property type="entry name" value="Aminotran_1_2"/>
    <property type="match status" value="1"/>
</dbReference>
<dbReference type="SUPFAM" id="SSF53383">
    <property type="entry name" value="PLP-dependent transferases"/>
    <property type="match status" value="1"/>
</dbReference>
<dbReference type="PROSITE" id="PS00599">
    <property type="entry name" value="AA_TRANSFER_CLASS_2"/>
    <property type="match status" value="1"/>
</dbReference>
<comment type="catalytic activity">
    <reaction>
        <text>L-histidinol phosphate + 2-oxoglutarate = 3-(imidazol-4-yl)-2-oxopropyl phosphate + L-glutamate</text>
        <dbReference type="Rhea" id="RHEA:23744"/>
        <dbReference type="ChEBI" id="CHEBI:16810"/>
        <dbReference type="ChEBI" id="CHEBI:29985"/>
        <dbReference type="ChEBI" id="CHEBI:57766"/>
        <dbReference type="ChEBI" id="CHEBI:57980"/>
        <dbReference type="EC" id="2.6.1.9"/>
    </reaction>
</comment>
<comment type="cofactor">
    <cofactor evidence="1">
        <name>pyridoxal 5'-phosphate</name>
        <dbReference type="ChEBI" id="CHEBI:597326"/>
    </cofactor>
</comment>
<comment type="pathway">
    <text>Amino-acid biosynthesis; L-histidine biosynthesis; L-histidine from 5-phospho-alpha-D-ribose 1-diphosphate: step 7/9.</text>
</comment>
<comment type="subunit">
    <text evidence="1">Homodimer.</text>
</comment>
<comment type="similarity">
    <text evidence="2">Belongs to the class-II pyridoxal-phosphate-dependent aminotransferase family. Histidinol-phosphate aminotransferase subfamily.</text>
</comment>
<feature type="chain" id="PRO_0000153293" description="Histidinol-phosphate aminotransferase 1">
    <location>
        <begin position="1"/>
        <end position="353"/>
    </location>
</feature>
<feature type="modified residue" description="N6-(pyridoxal phosphate)lysine" evidence="1">
    <location>
        <position position="211"/>
    </location>
</feature>
<protein>
    <recommendedName>
        <fullName>Histidinol-phosphate aminotransferase 1</fullName>
        <ecNumber>2.6.1.9</ecNumber>
    </recommendedName>
    <alternativeName>
        <fullName>Imidazole acetol-phosphate transaminase 1</fullName>
    </alternativeName>
</protein>
<proteinExistence type="inferred from homology"/>
<accession>Q8YV89</accession>
<name>HIS81_NOSS1</name>
<keyword id="KW-0028">Amino-acid biosynthesis</keyword>
<keyword id="KW-0032">Aminotransferase</keyword>
<keyword id="KW-0368">Histidine biosynthesis</keyword>
<keyword id="KW-0663">Pyridoxal phosphate</keyword>
<keyword id="KW-1185">Reference proteome</keyword>
<keyword id="KW-0808">Transferase</keyword>
<gene>
    <name type="primary">hisC1</name>
    <name type="ordered locus">alr2092</name>
</gene>
<sequence>MTNYFRSNVEAMASYVPGEQPPQGTQVIKLNSNENPYPPSPEALAAIKDIDGECLRRYPEPFGEEFRKAVSQLLGVPCNWVIVGNGSDEILSIVIRACAEPTRKVVYPVPTYVLYRTLTEMQAADILEIPYREYNILPVADLIAAHGSVTFIASPNSPSGHVVPSDDLRKLASELSGVLVIDEAYVDFAEESALNLVQDHENVILIRTLSKGYSLAGLRLGFGVGNPQLLNGLFKVKDSYNVDAIACKVATAAITDQAYKNACVAKVKASRTRLAKDLKQLGFCVWDSQANFLLTQPPQGNAEYLYQQLREKKILIRYFKQPGLEDKLRITVGTDEQNQILLQALRDLLESRD</sequence>